<protein>
    <recommendedName>
        <fullName evidence="1">Ketol-acid reductoisomerase (NADP(+))</fullName>
        <shortName evidence="1">KARI</shortName>
        <ecNumber evidence="1">1.1.1.86</ecNumber>
    </recommendedName>
    <alternativeName>
        <fullName evidence="1">Acetohydroxy-acid isomeroreductase</fullName>
        <shortName evidence="1">AHIR</shortName>
    </alternativeName>
    <alternativeName>
        <fullName evidence="1">Alpha-keto-beta-hydroxylacyl reductoisomerase</fullName>
    </alternativeName>
    <alternativeName>
        <fullName evidence="1">Ketol-acid reductoisomerase type 1</fullName>
    </alternativeName>
    <alternativeName>
        <fullName evidence="1">Ketol-acid reductoisomerase type I</fullName>
    </alternativeName>
</protein>
<organism>
    <name type="scientific">Halorhodospira halophila (strain DSM 244 / SL1)</name>
    <name type="common">Ectothiorhodospira halophila (strain DSM 244 / SL1)</name>
    <dbReference type="NCBI Taxonomy" id="349124"/>
    <lineage>
        <taxon>Bacteria</taxon>
        <taxon>Pseudomonadati</taxon>
        <taxon>Pseudomonadota</taxon>
        <taxon>Gammaproteobacteria</taxon>
        <taxon>Chromatiales</taxon>
        <taxon>Ectothiorhodospiraceae</taxon>
        <taxon>Halorhodospira</taxon>
    </lineage>
</organism>
<keyword id="KW-0028">Amino-acid biosynthesis</keyword>
<keyword id="KW-0100">Branched-chain amino acid biosynthesis</keyword>
<keyword id="KW-0460">Magnesium</keyword>
<keyword id="KW-0479">Metal-binding</keyword>
<keyword id="KW-0521">NADP</keyword>
<keyword id="KW-0560">Oxidoreductase</keyword>
<keyword id="KW-1185">Reference proteome</keyword>
<name>ILVC_HALHL</name>
<gene>
    <name evidence="1" type="primary">ilvC</name>
    <name type="ordered locus">Hhal_0693</name>
</gene>
<accession>A1WUW3</accession>
<feature type="chain" id="PRO_1000050515" description="Ketol-acid reductoisomerase (NADP(+))">
    <location>
        <begin position="1"/>
        <end position="336"/>
    </location>
</feature>
<feature type="domain" description="KARI N-terminal Rossmann" evidence="2">
    <location>
        <begin position="1"/>
        <end position="181"/>
    </location>
</feature>
<feature type="domain" description="KARI C-terminal knotted" evidence="3">
    <location>
        <begin position="182"/>
        <end position="327"/>
    </location>
</feature>
<feature type="active site" evidence="1">
    <location>
        <position position="107"/>
    </location>
</feature>
<feature type="binding site" evidence="1">
    <location>
        <begin position="24"/>
        <end position="27"/>
    </location>
    <ligand>
        <name>NADP(+)</name>
        <dbReference type="ChEBI" id="CHEBI:58349"/>
    </ligand>
</feature>
<feature type="binding site" evidence="1">
    <location>
        <position position="47"/>
    </location>
    <ligand>
        <name>NADP(+)</name>
        <dbReference type="ChEBI" id="CHEBI:58349"/>
    </ligand>
</feature>
<feature type="binding site" evidence="1">
    <location>
        <position position="50"/>
    </location>
    <ligand>
        <name>NADP(+)</name>
        <dbReference type="ChEBI" id="CHEBI:58349"/>
    </ligand>
</feature>
<feature type="binding site" evidence="1">
    <location>
        <position position="52"/>
    </location>
    <ligand>
        <name>NADP(+)</name>
        <dbReference type="ChEBI" id="CHEBI:58349"/>
    </ligand>
</feature>
<feature type="binding site" evidence="1">
    <location>
        <position position="133"/>
    </location>
    <ligand>
        <name>NADP(+)</name>
        <dbReference type="ChEBI" id="CHEBI:58349"/>
    </ligand>
</feature>
<feature type="binding site" evidence="1">
    <location>
        <position position="190"/>
    </location>
    <ligand>
        <name>Mg(2+)</name>
        <dbReference type="ChEBI" id="CHEBI:18420"/>
        <label>1</label>
    </ligand>
</feature>
<feature type="binding site" evidence="1">
    <location>
        <position position="190"/>
    </location>
    <ligand>
        <name>Mg(2+)</name>
        <dbReference type="ChEBI" id="CHEBI:18420"/>
        <label>2</label>
    </ligand>
</feature>
<feature type="binding site" evidence="1">
    <location>
        <position position="194"/>
    </location>
    <ligand>
        <name>Mg(2+)</name>
        <dbReference type="ChEBI" id="CHEBI:18420"/>
        <label>1</label>
    </ligand>
</feature>
<feature type="binding site" evidence="1">
    <location>
        <position position="226"/>
    </location>
    <ligand>
        <name>Mg(2+)</name>
        <dbReference type="ChEBI" id="CHEBI:18420"/>
        <label>2</label>
    </ligand>
</feature>
<feature type="binding site" evidence="1">
    <location>
        <position position="230"/>
    </location>
    <ligand>
        <name>Mg(2+)</name>
        <dbReference type="ChEBI" id="CHEBI:18420"/>
        <label>2</label>
    </ligand>
</feature>
<feature type="binding site" evidence="1">
    <location>
        <position position="251"/>
    </location>
    <ligand>
        <name>substrate</name>
    </ligand>
</feature>
<evidence type="ECO:0000255" key="1">
    <source>
        <dbReference type="HAMAP-Rule" id="MF_00435"/>
    </source>
</evidence>
<evidence type="ECO:0000255" key="2">
    <source>
        <dbReference type="PROSITE-ProRule" id="PRU01197"/>
    </source>
</evidence>
<evidence type="ECO:0000255" key="3">
    <source>
        <dbReference type="PROSITE-ProRule" id="PRU01198"/>
    </source>
</evidence>
<reference key="1">
    <citation type="submission" date="2006-12" db="EMBL/GenBank/DDBJ databases">
        <title>Complete sequence of Halorhodospira halophila SL1.</title>
        <authorList>
            <consortium name="US DOE Joint Genome Institute"/>
            <person name="Copeland A."/>
            <person name="Lucas S."/>
            <person name="Lapidus A."/>
            <person name="Barry K."/>
            <person name="Detter J.C."/>
            <person name="Glavina del Rio T."/>
            <person name="Hammon N."/>
            <person name="Israni S."/>
            <person name="Dalin E."/>
            <person name="Tice H."/>
            <person name="Pitluck S."/>
            <person name="Saunders E."/>
            <person name="Brettin T."/>
            <person name="Bruce D."/>
            <person name="Han C."/>
            <person name="Tapia R."/>
            <person name="Schmutz J."/>
            <person name="Larimer F."/>
            <person name="Land M."/>
            <person name="Hauser L."/>
            <person name="Kyrpides N."/>
            <person name="Mikhailova N."/>
            <person name="Hoff W."/>
            <person name="Richardson P."/>
        </authorList>
    </citation>
    <scope>NUCLEOTIDE SEQUENCE [LARGE SCALE GENOMIC DNA]</scope>
    <source>
        <strain>DSM 244 / SL1</strain>
    </source>
</reference>
<comment type="function">
    <text evidence="1">Involved in the biosynthesis of branched-chain amino acids (BCAA). Catalyzes an alkyl-migration followed by a ketol-acid reduction of (S)-2-acetolactate (S2AL) to yield (R)-2,3-dihydroxy-isovalerate. In the isomerase reaction, S2AL is rearranged via a Mg-dependent methyl migration to produce 3-hydroxy-3-methyl-2-ketobutyrate (HMKB). In the reductase reaction, this 2-ketoacid undergoes a metal-dependent reduction by NADPH to yield (R)-2,3-dihydroxy-isovalerate.</text>
</comment>
<comment type="catalytic activity">
    <reaction evidence="1">
        <text>(2R)-2,3-dihydroxy-3-methylbutanoate + NADP(+) = (2S)-2-acetolactate + NADPH + H(+)</text>
        <dbReference type="Rhea" id="RHEA:22068"/>
        <dbReference type="ChEBI" id="CHEBI:15378"/>
        <dbReference type="ChEBI" id="CHEBI:49072"/>
        <dbReference type="ChEBI" id="CHEBI:57783"/>
        <dbReference type="ChEBI" id="CHEBI:58349"/>
        <dbReference type="ChEBI" id="CHEBI:58476"/>
        <dbReference type="EC" id="1.1.1.86"/>
    </reaction>
</comment>
<comment type="catalytic activity">
    <reaction evidence="1">
        <text>(2R,3R)-2,3-dihydroxy-3-methylpentanoate + NADP(+) = (S)-2-ethyl-2-hydroxy-3-oxobutanoate + NADPH + H(+)</text>
        <dbReference type="Rhea" id="RHEA:13493"/>
        <dbReference type="ChEBI" id="CHEBI:15378"/>
        <dbReference type="ChEBI" id="CHEBI:49256"/>
        <dbReference type="ChEBI" id="CHEBI:49258"/>
        <dbReference type="ChEBI" id="CHEBI:57783"/>
        <dbReference type="ChEBI" id="CHEBI:58349"/>
        <dbReference type="EC" id="1.1.1.86"/>
    </reaction>
</comment>
<comment type="cofactor">
    <cofactor evidence="1">
        <name>Mg(2+)</name>
        <dbReference type="ChEBI" id="CHEBI:18420"/>
    </cofactor>
    <text evidence="1">Binds 2 magnesium ions per subunit.</text>
</comment>
<comment type="pathway">
    <text evidence="1">Amino-acid biosynthesis; L-isoleucine biosynthesis; L-isoleucine from 2-oxobutanoate: step 2/4.</text>
</comment>
<comment type="pathway">
    <text evidence="1">Amino-acid biosynthesis; L-valine biosynthesis; L-valine from pyruvate: step 2/4.</text>
</comment>
<comment type="similarity">
    <text evidence="1">Belongs to the ketol-acid reductoisomerase family.</text>
</comment>
<proteinExistence type="inferred from homology"/>
<sequence length="336" mass="36105">MKVYYDQDADLSRITSRRVAIIGYGSQGHAHANNLKESGVNVVVGLRPGSSSAAKAQEAGLEVASVEEATQGADVVMMLVPDEAAPDIYNQQVAPNLKDGAAIAFAHGFNIHYGQIQPAADHDVIMIAPKGPGHTVRSTYVAGAGVPSLIAIEQDASGQAKEIALAYAVANGGGRSGIIETSFREETETDLFGEQTVLCGGIAALIEAGFETLVEAGYAPEMAYFECLHETKLIVDLLYEGGLANMRYSVSNTAEYGDFTRGPRVINEESREAMREILEEIQNGDFAKEYVLENKAGAPTLHARRRLAAEHPIEEVGERLRGMMPWIAANKLVDRD</sequence>
<dbReference type="EC" id="1.1.1.86" evidence="1"/>
<dbReference type="EMBL" id="CP000544">
    <property type="protein sequence ID" value="ABM61475.1"/>
    <property type="molecule type" value="Genomic_DNA"/>
</dbReference>
<dbReference type="RefSeq" id="WP_011813498.1">
    <property type="nucleotide sequence ID" value="NC_008789.1"/>
</dbReference>
<dbReference type="SMR" id="A1WUW3"/>
<dbReference type="STRING" id="349124.Hhal_0693"/>
<dbReference type="KEGG" id="hha:Hhal_0693"/>
<dbReference type="eggNOG" id="COG0059">
    <property type="taxonomic scope" value="Bacteria"/>
</dbReference>
<dbReference type="HOGENOM" id="CLU_033821_0_1_6"/>
<dbReference type="OrthoDB" id="9804088at2"/>
<dbReference type="UniPathway" id="UPA00047">
    <property type="reaction ID" value="UER00056"/>
</dbReference>
<dbReference type="UniPathway" id="UPA00049">
    <property type="reaction ID" value="UER00060"/>
</dbReference>
<dbReference type="Proteomes" id="UP000000647">
    <property type="component" value="Chromosome"/>
</dbReference>
<dbReference type="GO" id="GO:0005829">
    <property type="term" value="C:cytosol"/>
    <property type="evidence" value="ECO:0007669"/>
    <property type="project" value="TreeGrafter"/>
</dbReference>
<dbReference type="GO" id="GO:0004455">
    <property type="term" value="F:ketol-acid reductoisomerase activity"/>
    <property type="evidence" value="ECO:0007669"/>
    <property type="project" value="UniProtKB-UniRule"/>
</dbReference>
<dbReference type="GO" id="GO:0000287">
    <property type="term" value="F:magnesium ion binding"/>
    <property type="evidence" value="ECO:0007669"/>
    <property type="project" value="UniProtKB-UniRule"/>
</dbReference>
<dbReference type="GO" id="GO:0050661">
    <property type="term" value="F:NADP binding"/>
    <property type="evidence" value="ECO:0007669"/>
    <property type="project" value="InterPro"/>
</dbReference>
<dbReference type="GO" id="GO:0009097">
    <property type="term" value="P:isoleucine biosynthetic process"/>
    <property type="evidence" value="ECO:0007669"/>
    <property type="project" value="UniProtKB-UniRule"/>
</dbReference>
<dbReference type="GO" id="GO:0009099">
    <property type="term" value="P:L-valine biosynthetic process"/>
    <property type="evidence" value="ECO:0007669"/>
    <property type="project" value="UniProtKB-UniRule"/>
</dbReference>
<dbReference type="FunFam" id="3.40.50.720:FF:000023">
    <property type="entry name" value="Ketol-acid reductoisomerase (NADP(+))"/>
    <property type="match status" value="1"/>
</dbReference>
<dbReference type="Gene3D" id="6.10.240.10">
    <property type="match status" value="1"/>
</dbReference>
<dbReference type="Gene3D" id="3.40.50.720">
    <property type="entry name" value="NAD(P)-binding Rossmann-like Domain"/>
    <property type="match status" value="1"/>
</dbReference>
<dbReference type="HAMAP" id="MF_00435">
    <property type="entry name" value="IlvC"/>
    <property type="match status" value="1"/>
</dbReference>
<dbReference type="InterPro" id="IPR008927">
    <property type="entry name" value="6-PGluconate_DH-like_C_sf"/>
</dbReference>
<dbReference type="InterPro" id="IPR013023">
    <property type="entry name" value="KARI"/>
</dbReference>
<dbReference type="InterPro" id="IPR000506">
    <property type="entry name" value="KARI_C"/>
</dbReference>
<dbReference type="InterPro" id="IPR013116">
    <property type="entry name" value="KARI_N"/>
</dbReference>
<dbReference type="InterPro" id="IPR014359">
    <property type="entry name" value="KARI_prok"/>
</dbReference>
<dbReference type="InterPro" id="IPR036291">
    <property type="entry name" value="NAD(P)-bd_dom_sf"/>
</dbReference>
<dbReference type="NCBIfam" id="TIGR00465">
    <property type="entry name" value="ilvC"/>
    <property type="match status" value="1"/>
</dbReference>
<dbReference type="NCBIfam" id="NF004017">
    <property type="entry name" value="PRK05479.1"/>
    <property type="match status" value="1"/>
</dbReference>
<dbReference type="NCBIfam" id="NF009940">
    <property type="entry name" value="PRK13403.1"/>
    <property type="match status" value="1"/>
</dbReference>
<dbReference type="PANTHER" id="PTHR21371">
    <property type="entry name" value="KETOL-ACID REDUCTOISOMERASE, MITOCHONDRIAL"/>
    <property type="match status" value="1"/>
</dbReference>
<dbReference type="PANTHER" id="PTHR21371:SF1">
    <property type="entry name" value="KETOL-ACID REDUCTOISOMERASE, MITOCHONDRIAL"/>
    <property type="match status" value="1"/>
</dbReference>
<dbReference type="Pfam" id="PF01450">
    <property type="entry name" value="KARI_C"/>
    <property type="match status" value="1"/>
</dbReference>
<dbReference type="Pfam" id="PF07991">
    <property type="entry name" value="KARI_N"/>
    <property type="match status" value="1"/>
</dbReference>
<dbReference type="PIRSF" id="PIRSF000116">
    <property type="entry name" value="IlvC_gammaproteo"/>
    <property type="match status" value="1"/>
</dbReference>
<dbReference type="SUPFAM" id="SSF48179">
    <property type="entry name" value="6-phosphogluconate dehydrogenase C-terminal domain-like"/>
    <property type="match status" value="1"/>
</dbReference>
<dbReference type="SUPFAM" id="SSF51735">
    <property type="entry name" value="NAD(P)-binding Rossmann-fold domains"/>
    <property type="match status" value="1"/>
</dbReference>
<dbReference type="PROSITE" id="PS51851">
    <property type="entry name" value="KARI_C"/>
    <property type="match status" value="1"/>
</dbReference>
<dbReference type="PROSITE" id="PS51850">
    <property type="entry name" value="KARI_N"/>
    <property type="match status" value="1"/>
</dbReference>